<reference key="1">
    <citation type="journal article" date="1996" name="Mol. Cell. Biol.">
        <title>Schizosaccharomyces pombe pcr1+ encodes a CREB/ATF protein involved in regulation of gene expression for sexual development.</title>
        <authorList>
            <person name="Watanabe Y."/>
            <person name="Yamamoto M."/>
        </authorList>
    </citation>
    <scope>NUCLEOTIDE SEQUENCE [GENOMIC DNA]</scope>
    <scope>FUNCTION</scope>
</reference>
<reference key="2">
    <citation type="submission" date="1997-02" db="EMBL/GenBank/DDBJ databases">
        <authorList>
            <person name="Kon N."/>
            <person name="Krawchuk M.D."/>
            <person name="Warren B.G."/>
            <person name="Smith G.R."/>
            <person name="Wahls W.P."/>
        </authorList>
    </citation>
    <scope>NUCLEOTIDE SEQUENCE [GENOMIC DNA]</scope>
</reference>
<reference key="3">
    <citation type="journal article" date="2002" name="Nature">
        <title>The genome sequence of Schizosaccharomyces pombe.</title>
        <authorList>
            <person name="Wood V."/>
            <person name="Gwilliam R."/>
            <person name="Rajandream M.A."/>
            <person name="Lyne M.H."/>
            <person name="Lyne R."/>
            <person name="Stewart A."/>
            <person name="Sgouros J.G."/>
            <person name="Peat N."/>
            <person name="Hayles J."/>
            <person name="Baker S.G."/>
            <person name="Basham D."/>
            <person name="Bowman S."/>
            <person name="Brooks K."/>
            <person name="Brown D."/>
            <person name="Brown S."/>
            <person name="Chillingworth T."/>
            <person name="Churcher C.M."/>
            <person name="Collins M."/>
            <person name="Connor R."/>
            <person name="Cronin A."/>
            <person name="Davis P."/>
            <person name="Feltwell T."/>
            <person name="Fraser A."/>
            <person name="Gentles S."/>
            <person name="Goble A."/>
            <person name="Hamlin N."/>
            <person name="Harris D.E."/>
            <person name="Hidalgo J."/>
            <person name="Hodgson G."/>
            <person name="Holroyd S."/>
            <person name="Hornsby T."/>
            <person name="Howarth S."/>
            <person name="Huckle E.J."/>
            <person name="Hunt S."/>
            <person name="Jagels K."/>
            <person name="James K.D."/>
            <person name="Jones L."/>
            <person name="Jones M."/>
            <person name="Leather S."/>
            <person name="McDonald S."/>
            <person name="McLean J."/>
            <person name="Mooney P."/>
            <person name="Moule S."/>
            <person name="Mungall K.L."/>
            <person name="Murphy L.D."/>
            <person name="Niblett D."/>
            <person name="Odell C."/>
            <person name="Oliver K."/>
            <person name="O'Neil S."/>
            <person name="Pearson D."/>
            <person name="Quail M.A."/>
            <person name="Rabbinowitsch E."/>
            <person name="Rutherford K.M."/>
            <person name="Rutter S."/>
            <person name="Saunders D."/>
            <person name="Seeger K."/>
            <person name="Sharp S."/>
            <person name="Skelton J."/>
            <person name="Simmonds M.N."/>
            <person name="Squares R."/>
            <person name="Squares S."/>
            <person name="Stevens K."/>
            <person name="Taylor K."/>
            <person name="Taylor R.G."/>
            <person name="Tivey A."/>
            <person name="Walsh S.V."/>
            <person name="Warren T."/>
            <person name="Whitehead S."/>
            <person name="Woodward J.R."/>
            <person name="Volckaert G."/>
            <person name="Aert R."/>
            <person name="Robben J."/>
            <person name="Grymonprez B."/>
            <person name="Weltjens I."/>
            <person name="Vanstreels E."/>
            <person name="Rieger M."/>
            <person name="Schaefer M."/>
            <person name="Mueller-Auer S."/>
            <person name="Gabel C."/>
            <person name="Fuchs M."/>
            <person name="Duesterhoeft A."/>
            <person name="Fritzc C."/>
            <person name="Holzer E."/>
            <person name="Moestl D."/>
            <person name="Hilbert H."/>
            <person name="Borzym K."/>
            <person name="Langer I."/>
            <person name="Beck A."/>
            <person name="Lehrach H."/>
            <person name="Reinhardt R."/>
            <person name="Pohl T.M."/>
            <person name="Eger P."/>
            <person name="Zimmermann W."/>
            <person name="Wedler H."/>
            <person name="Wambutt R."/>
            <person name="Purnelle B."/>
            <person name="Goffeau A."/>
            <person name="Cadieu E."/>
            <person name="Dreano S."/>
            <person name="Gloux S."/>
            <person name="Lelaure V."/>
            <person name="Mottier S."/>
            <person name="Galibert F."/>
            <person name="Aves S.J."/>
            <person name="Xiang Z."/>
            <person name="Hunt C."/>
            <person name="Moore K."/>
            <person name="Hurst S.M."/>
            <person name="Lucas M."/>
            <person name="Rochet M."/>
            <person name="Gaillardin C."/>
            <person name="Tallada V.A."/>
            <person name="Garzon A."/>
            <person name="Thode G."/>
            <person name="Daga R.R."/>
            <person name="Cruzado L."/>
            <person name="Jimenez J."/>
            <person name="Sanchez M."/>
            <person name="del Rey F."/>
            <person name="Benito J."/>
            <person name="Dominguez A."/>
            <person name="Revuelta J.L."/>
            <person name="Moreno S."/>
            <person name="Armstrong J."/>
            <person name="Forsburg S.L."/>
            <person name="Cerutti L."/>
            <person name="Lowe T."/>
            <person name="McCombie W.R."/>
            <person name="Paulsen I."/>
            <person name="Potashkin J."/>
            <person name="Shpakovski G.V."/>
            <person name="Ussery D."/>
            <person name="Barrell B.G."/>
            <person name="Nurse P."/>
        </authorList>
    </citation>
    <scope>NUCLEOTIDE SEQUENCE [LARGE SCALE GENOMIC DNA]</scope>
    <source>
        <strain>972 / ATCC 24843</strain>
    </source>
</reference>
<reference key="4">
    <citation type="journal article" date="1994" name="Genes Dev.">
        <title>A heteromeric protein that binds to a meiotic homologous recombination hot spot: correlation of binding and hot spot activity.</title>
        <authorList>
            <person name="Wahls W.P."/>
            <person name="Smith G.R."/>
        </authorList>
    </citation>
    <scope>CHARACTERIZATION</scope>
</reference>
<reference key="5">
    <citation type="journal article" date="2017" name="Sci. Rep.">
        <title>Elp3 and Dph3 of Schizosaccharomyces pombe mediate cellular stress responses through tRNALysUUU modifications.</title>
        <authorList>
            <person name="Villahermosa D."/>
            <person name="Fleck O."/>
        </authorList>
    </citation>
    <scope>DISRUPTION PHENOTYPE</scope>
</reference>
<feature type="chain" id="PRO_0000076535" description="Transcription factor pcr1">
    <location>
        <begin position="1"/>
        <end position="171"/>
    </location>
</feature>
<feature type="domain" description="bZIP" evidence="1">
    <location>
        <begin position="10"/>
        <end position="73"/>
    </location>
</feature>
<feature type="region of interest" description="Basic motif" evidence="1">
    <location>
        <begin position="12"/>
        <end position="51"/>
    </location>
</feature>
<feature type="region of interest" description="Leucine-zipper" evidence="1">
    <location>
        <begin position="52"/>
        <end position="66"/>
    </location>
</feature>
<feature type="region of interest" description="Disordered" evidence="2">
    <location>
        <begin position="125"/>
        <end position="171"/>
    </location>
</feature>
<feature type="compositionally biased region" description="Low complexity" evidence="2">
    <location>
        <begin position="143"/>
        <end position="152"/>
    </location>
</feature>
<organism>
    <name type="scientific">Schizosaccharomyces pombe (strain 972 / ATCC 24843)</name>
    <name type="common">Fission yeast</name>
    <dbReference type="NCBI Taxonomy" id="284812"/>
    <lineage>
        <taxon>Eukaryota</taxon>
        <taxon>Fungi</taxon>
        <taxon>Dikarya</taxon>
        <taxon>Ascomycota</taxon>
        <taxon>Taphrinomycotina</taxon>
        <taxon>Schizosaccharomycetes</taxon>
        <taxon>Schizosaccharomycetales</taxon>
        <taxon>Schizosaccharomycetaceae</taxon>
        <taxon>Schizosaccharomyces</taxon>
    </lineage>
</organism>
<evidence type="ECO:0000255" key="1">
    <source>
        <dbReference type="PROSITE-ProRule" id="PRU00978"/>
    </source>
</evidence>
<evidence type="ECO:0000256" key="2">
    <source>
        <dbReference type="SAM" id="MobiDB-lite"/>
    </source>
</evidence>
<evidence type="ECO:0000269" key="3">
    <source>
    </source>
</evidence>
<evidence type="ECO:0000269" key="4">
    <source>
    </source>
</evidence>
<evidence type="ECO:0000269" key="5">
    <source>
    </source>
</evidence>
<evidence type="ECO:0000305" key="6"/>
<protein>
    <recommendedName>
        <fullName>Transcription factor pcr1</fullName>
    </recommendedName>
    <alternativeName>
        <fullName>Transcription factor mts2</fullName>
    </alternativeName>
</protein>
<sequence length="171" mass="19348">MTAKKKEVDDEKRRRILERNRIAASKFRQKKKEWIKELEQTANAAFEQSKRLQLLLSQLQQEAFRLKSQLLAHQGCQCSVKIRSVLTDFQTAHNALHSQHMAYRPVQPPPGDNMLESVVSVSPTQMHPSLQGLPPNQHPQMPPSSQQPNSDDVQQHMFSAAGLPRSLGGPI</sequence>
<name>PCR1_SCHPO</name>
<comment type="function">
    <text evidence="4 5">Involved in regulation of gene expression for sexual development (PubMed:8552099). Binds and activates CRE sites (cAMP-response elements, also known as M26 meiotic recombination hotspots) (PubMed:7958849, PubMed:8552099).</text>
</comment>
<comment type="subunit">
    <text>Heterodimer of pcr1/mts2 and atf1/mts1.</text>
</comment>
<comment type="subcellular location">
    <subcellularLocation>
        <location evidence="1">Nucleus</location>
    </subcellularLocation>
</comment>
<comment type="disruption phenotype">
    <text evidence="3">Sensitive to cold and thermal stress, simultaneous disruption of dph3 suppresses the growth defect during thermal stress.</text>
</comment>
<comment type="similarity">
    <text evidence="6">Belongs to the bZIP family.</text>
</comment>
<proteinExistence type="evidence at protein level"/>
<keyword id="KW-0010">Activator</keyword>
<keyword id="KW-0238">DNA-binding</keyword>
<keyword id="KW-0469">Meiosis</keyword>
<keyword id="KW-0539">Nucleus</keyword>
<keyword id="KW-1185">Reference proteome</keyword>
<keyword id="KW-0804">Transcription</keyword>
<keyword id="KW-0805">Transcription regulation</keyword>
<accession>Q09926</accession>
<gene>
    <name type="primary">pcr1</name>
    <name type="synonym">mts2</name>
    <name type="ORF">SPAC21E11.03c</name>
</gene>
<dbReference type="EMBL" id="D63667">
    <property type="protein sequence ID" value="BAA09818.1"/>
    <property type="molecule type" value="Genomic_DNA"/>
</dbReference>
<dbReference type="EMBL" id="U87870">
    <property type="protein sequence ID" value="AAB46991.1"/>
    <property type="molecule type" value="Genomic_DNA"/>
</dbReference>
<dbReference type="EMBL" id="CU329670">
    <property type="protein sequence ID" value="CAA91968.1"/>
    <property type="molecule type" value="Genomic_DNA"/>
</dbReference>
<dbReference type="PIR" id="S62588">
    <property type="entry name" value="S62588"/>
</dbReference>
<dbReference type="RefSeq" id="NP_594500.1">
    <property type="nucleotide sequence ID" value="NM_001019929.2"/>
</dbReference>
<dbReference type="SMR" id="Q09926"/>
<dbReference type="BioGRID" id="278528">
    <property type="interactions" value="27"/>
</dbReference>
<dbReference type="FunCoup" id="Q09926">
    <property type="interactions" value="61"/>
</dbReference>
<dbReference type="STRING" id="284812.Q09926"/>
<dbReference type="PaxDb" id="4896-SPAC21E11.03c.1"/>
<dbReference type="EnsemblFungi" id="SPAC21E11.03c.1">
    <property type="protein sequence ID" value="SPAC21E11.03c.1:pep"/>
    <property type="gene ID" value="SPAC21E11.03c"/>
</dbReference>
<dbReference type="GeneID" id="2542047"/>
<dbReference type="KEGG" id="spo:2542047"/>
<dbReference type="PomBase" id="SPAC21E11.03c">
    <property type="gene designation" value="pcr1"/>
</dbReference>
<dbReference type="VEuPathDB" id="FungiDB:SPAC21E11.03c"/>
<dbReference type="eggNOG" id="KOG1414">
    <property type="taxonomic scope" value="Eukaryota"/>
</dbReference>
<dbReference type="HOGENOM" id="CLU_1571555_0_0_1"/>
<dbReference type="InParanoid" id="Q09926"/>
<dbReference type="OMA" id="QAQHMAY"/>
<dbReference type="PhylomeDB" id="Q09926"/>
<dbReference type="PRO" id="PR:Q09926"/>
<dbReference type="Proteomes" id="UP000002485">
    <property type="component" value="Chromosome I"/>
</dbReference>
<dbReference type="GO" id="GO:1990243">
    <property type="term" value="C:atf1-pcr1 complex"/>
    <property type="evidence" value="ECO:0000314"/>
    <property type="project" value="PomBase"/>
</dbReference>
<dbReference type="GO" id="GO:0072686">
    <property type="term" value="C:mitotic spindle"/>
    <property type="evidence" value="ECO:0007005"/>
    <property type="project" value="PomBase"/>
</dbReference>
<dbReference type="GO" id="GO:0005634">
    <property type="term" value="C:nucleus"/>
    <property type="evidence" value="ECO:0007005"/>
    <property type="project" value="PomBase"/>
</dbReference>
<dbReference type="GO" id="GO:0001228">
    <property type="term" value="F:DNA-binding transcription activator activity, RNA polymerase II-specific"/>
    <property type="evidence" value="ECO:0000314"/>
    <property type="project" value="PomBase"/>
</dbReference>
<dbReference type="GO" id="GO:0000981">
    <property type="term" value="F:DNA-binding transcription factor activity, RNA polymerase II-specific"/>
    <property type="evidence" value="ECO:0000315"/>
    <property type="project" value="PomBase"/>
</dbReference>
<dbReference type="GO" id="GO:0003690">
    <property type="term" value="F:double-stranded DNA binding"/>
    <property type="evidence" value="ECO:0000314"/>
    <property type="project" value="PomBase"/>
</dbReference>
<dbReference type="GO" id="GO:0010844">
    <property type="term" value="F:recombination hotspot binding"/>
    <property type="evidence" value="ECO:0000314"/>
    <property type="project" value="PomBase"/>
</dbReference>
<dbReference type="GO" id="GO:0000978">
    <property type="term" value="F:RNA polymerase II cis-regulatory region sequence-specific DNA binding"/>
    <property type="evidence" value="ECO:0000314"/>
    <property type="project" value="PomBase"/>
</dbReference>
<dbReference type="GO" id="GO:0043565">
    <property type="term" value="F:sequence-specific DNA binding"/>
    <property type="evidence" value="ECO:0000314"/>
    <property type="project" value="PomBase"/>
</dbReference>
<dbReference type="GO" id="GO:0110034">
    <property type="term" value="P:negative regulation of adenylate cyclase-activating glucose-activated G protein-coupled receptor signaling pathway"/>
    <property type="evidence" value="ECO:0000315"/>
    <property type="project" value="PomBase"/>
</dbReference>
<dbReference type="GO" id="GO:0045944">
    <property type="term" value="P:positive regulation of transcription by RNA polymerase II"/>
    <property type="evidence" value="ECO:0000315"/>
    <property type="project" value="PomBase"/>
</dbReference>
<dbReference type="GO" id="GO:0007131">
    <property type="term" value="P:reciprocal meiotic recombination"/>
    <property type="evidence" value="ECO:0000315"/>
    <property type="project" value="PomBase"/>
</dbReference>
<dbReference type="GO" id="GO:0006357">
    <property type="term" value="P:regulation of transcription by RNA polymerase II"/>
    <property type="evidence" value="ECO:0000315"/>
    <property type="project" value="PomBase"/>
</dbReference>
<dbReference type="GO" id="GO:0030466">
    <property type="term" value="P:silent mating-type cassette heterochromatin formation"/>
    <property type="evidence" value="ECO:0000314"/>
    <property type="project" value="PomBase"/>
</dbReference>
<dbReference type="CDD" id="cd14687">
    <property type="entry name" value="bZIP_ATF2"/>
    <property type="match status" value="1"/>
</dbReference>
<dbReference type="FunFam" id="1.20.5.170:FF:000010">
    <property type="entry name" value="Cyclic AMP-dependent transcription factor ATF-2"/>
    <property type="match status" value="1"/>
</dbReference>
<dbReference type="Gene3D" id="1.20.5.170">
    <property type="match status" value="1"/>
</dbReference>
<dbReference type="InterPro" id="IPR004827">
    <property type="entry name" value="bZIP"/>
</dbReference>
<dbReference type="InterPro" id="IPR046347">
    <property type="entry name" value="bZIP_sf"/>
</dbReference>
<dbReference type="InterPro" id="IPR051027">
    <property type="entry name" value="bZIP_transcription_factors"/>
</dbReference>
<dbReference type="PANTHER" id="PTHR19304">
    <property type="entry name" value="CYCLIC-AMP RESPONSE ELEMENT BINDING PROTEIN"/>
    <property type="match status" value="1"/>
</dbReference>
<dbReference type="Pfam" id="PF00170">
    <property type="entry name" value="bZIP_1"/>
    <property type="match status" value="1"/>
</dbReference>
<dbReference type="SMART" id="SM00338">
    <property type="entry name" value="BRLZ"/>
    <property type="match status" value="1"/>
</dbReference>
<dbReference type="SUPFAM" id="SSF57959">
    <property type="entry name" value="Leucine zipper domain"/>
    <property type="match status" value="1"/>
</dbReference>
<dbReference type="PROSITE" id="PS50217">
    <property type="entry name" value="BZIP"/>
    <property type="match status" value="1"/>
</dbReference>
<dbReference type="PROSITE" id="PS00036">
    <property type="entry name" value="BZIP_BASIC"/>
    <property type="match status" value="1"/>
</dbReference>